<evidence type="ECO:0000250" key="1">
    <source>
        <dbReference type="UniProtKB" id="Q4PMW1"/>
    </source>
</evidence>
<evidence type="ECO:0000255" key="2"/>
<evidence type="ECO:0000303" key="3">
    <source>
    </source>
</evidence>
<evidence type="ECO:0000305" key="4"/>
<evidence type="ECO:0000312" key="5">
    <source>
        <dbReference type="EMBL" id="AAT92147.1"/>
    </source>
</evidence>
<reference evidence="5" key="1">
    <citation type="journal article" date="2005" name="Insect Biochem. Mol. Biol.">
        <title>The transcriptome of the salivary glands of the female western black-legged tick Ixodes pacificus (Acari: Ixodidae).</title>
        <authorList>
            <person name="Francischetti I.M."/>
            <person name="My Pham V."/>
            <person name="Mans B.J."/>
            <person name="Andersen J.F."/>
            <person name="Mather T.N."/>
            <person name="Lane R.S."/>
            <person name="Ribeiro J.M."/>
        </authorList>
    </citation>
    <scope>NUCLEOTIDE SEQUENCE [MRNA]</scope>
    <source>
        <tissue>Salivary gland</tissue>
    </source>
</reference>
<name>IXOL_IXOPA</name>
<dbReference type="EMBL" id="AY674214">
    <property type="protein sequence ID" value="AAT92147.1"/>
    <property type="molecule type" value="mRNA"/>
</dbReference>
<dbReference type="SMR" id="Q6B8D2"/>
<dbReference type="GO" id="GO:0005576">
    <property type="term" value="C:extracellular region"/>
    <property type="evidence" value="ECO:0007669"/>
    <property type="project" value="UniProtKB-SubCell"/>
</dbReference>
<dbReference type="GO" id="GO:0090729">
    <property type="term" value="F:toxin activity"/>
    <property type="evidence" value="ECO:0007669"/>
    <property type="project" value="UniProtKB-KW"/>
</dbReference>
<keyword id="KW-1015">Disulfide bond</keyword>
<keyword id="KW-1199">Hemostasis impairing toxin</keyword>
<keyword id="KW-1201">Platelet aggregation inhibiting toxin</keyword>
<keyword id="KW-0964">Secreted</keyword>
<keyword id="KW-0732">Signal</keyword>
<keyword id="KW-0800">Toxin</keyword>
<sequence length="60" mass="6537">MNAAFIAALFILGALTLDAMAYSPTCEGKPCANNTDCKGSNLCQCRPPRGDDWRNFCSEY</sequence>
<accession>Q6B8D2</accession>
<feature type="signal peptide" evidence="2">
    <location>
        <begin position="1"/>
        <end position="21"/>
    </location>
</feature>
<feature type="chain" id="PRO_5004270840" description="Ixodegrin-Ip" evidence="4">
    <location>
        <begin position="22"/>
        <end position="60"/>
    </location>
</feature>
<feature type="short sequence motif" description="Cell attachment site" evidence="1">
    <location>
        <begin position="49"/>
        <end position="51"/>
    </location>
</feature>
<protein>
    <recommendedName>
        <fullName evidence="3">Ixodegrin-Ip</fullName>
    </recommendedName>
    <alternativeName>
        <fullName evidence="1">Platelet aggregation inhibitor</fullName>
        <shortName evidence="1">PAI</shortName>
    </alternativeName>
    <alternativeName>
        <fullName evidence="1">Tick anti-thrombosis peptide</fullName>
    </alternativeName>
</protein>
<organism>
    <name type="scientific">Ixodes pacificus</name>
    <name type="common">Western black-legged tick</name>
    <dbReference type="NCBI Taxonomy" id="29930"/>
    <lineage>
        <taxon>Eukaryota</taxon>
        <taxon>Metazoa</taxon>
        <taxon>Ecdysozoa</taxon>
        <taxon>Arthropoda</taxon>
        <taxon>Chelicerata</taxon>
        <taxon>Arachnida</taxon>
        <taxon>Acari</taxon>
        <taxon>Parasitiformes</taxon>
        <taxon>Ixodida</taxon>
        <taxon>Ixodoidea</taxon>
        <taxon>Ixodidae</taxon>
        <taxon>Ixodinae</taxon>
        <taxon>Ixodes</taxon>
    </lineage>
</organism>
<comment type="function">
    <text evidence="1">Tick salivary platelet aggregation inhibitor that plays an important part in the anti-hemostatic strategy of ticks. Inhibits platelet aggregation induced by ADP, thrombin and thromboxane A2 (TXA2). Blocks platelet adhesion to soluble collagen (most probably through the binding to alpha-2/beta-1 integrin (ITGA2/ITGB1)) and binds to purified glycoprotein IIb/IIIa (ITGA2B/ITGB3) in a dose-dependent manner. In vivo, reduces thrombus weight effectively in a rat arteriovenous shunt model and inhibits thrombosis in a carrageenan-induced mouse tail thrombosis model.</text>
</comment>
<comment type="subcellular location">
    <subcellularLocation>
        <location evidence="1">Secreted</location>
    </subcellularLocation>
</comment>
<comment type="tissue specificity">
    <text evidence="1">Expressed in salivary glands.</text>
</comment>
<comment type="PTM">
    <text evidence="1">Contains 3 disulfide bonds.</text>
</comment>
<comment type="similarity">
    <text evidence="4">Belongs to the ixodegrin family.</text>
</comment>
<proteinExistence type="inferred from homology"/>